<name>DEFD2_SPIOL</name>
<proteinExistence type="evidence at protein level"/>
<keyword id="KW-0044">Antibiotic</keyword>
<keyword id="KW-0929">Antimicrobial</keyword>
<keyword id="KW-0134">Cell wall</keyword>
<keyword id="KW-0903">Direct protein sequencing</keyword>
<keyword id="KW-1015">Disulfide bond</keyword>
<keyword id="KW-0295">Fungicide</keyword>
<keyword id="KW-0611">Plant defense</keyword>
<keyword id="KW-1185">Reference proteome</keyword>
<keyword id="KW-0964">Secreted</keyword>
<reference evidence="3" key="1">
    <citation type="journal article" date="1998" name="FEBS Lett.">
        <title>Novel defensin subfamily from spinach (Spinacia oleracea).</title>
        <authorList>
            <person name="Segura A."/>
            <person name="Moreno M."/>
            <person name="Molina A."/>
            <person name="Garcia-Olmedo F."/>
        </authorList>
    </citation>
    <scope>PROTEIN SEQUENCE</scope>
    <scope>MASS SPECTROMETRY</scope>
    <source>
        <strain>cv. Matador</strain>
        <tissue>Leaf</tissue>
    </source>
</reference>
<evidence type="ECO:0000250" key="1"/>
<evidence type="ECO:0000269" key="2">
    <source>
    </source>
</evidence>
<evidence type="ECO:0000305" key="3"/>
<sequence length="52" mass="5804">GIFSSRKCKTPSKTFKGICTRDSNCDTSCRYEGYPAGDCKGIRRRCMCSKPC</sequence>
<feature type="chain" id="PRO_0000074252" description="Defensin D2">
    <location>
        <begin position="1"/>
        <end position="52" status="greater than"/>
    </location>
</feature>
<feature type="disulfide bond" evidence="1">
    <location>
        <begin position="8"/>
        <end position="52"/>
    </location>
</feature>
<feature type="disulfide bond" evidence="1">
    <location>
        <begin position="19"/>
        <end position="39"/>
    </location>
</feature>
<feature type="disulfide bond" evidence="1">
    <location>
        <begin position="25"/>
        <end position="46"/>
    </location>
</feature>
<feature type="disulfide bond" evidence="1">
    <location>
        <begin position="29"/>
        <end position="48"/>
    </location>
</feature>
<feature type="non-terminal residue" evidence="3">
    <location>
        <position position="52"/>
    </location>
</feature>
<protein>
    <recommendedName>
        <fullName>Defensin D2</fullName>
    </recommendedName>
    <alternativeName>
        <fullName>Antimicrobial peptide D2</fullName>
    </alternativeName>
    <alternativeName>
        <fullName>So-D2</fullName>
    </alternativeName>
</protein>
<accession>P81571</accession>
<dbReference type="SMR" id="P81571"/>
<dbReference type="Proteomes" id="UP001155700">
    <property type="component" value="Unplaced"/>
</dbReference>
<dbReference type="GO" id="GO:0005576">
    <property type="term" value="C:extracellular region"/>
    <property type="evidence" value="ECO:0007669"/>
    <property type="project" value="UniProtKB-KW"/>
</dbReference>
<dbReference type="GO" id="GO:0042742">
    <property type="term" value="P:defense response to bacterium"/>
    <property type="evidence" value="ECO:0007669"/>
    <property type="project" value="UniProtKB-KW"/>
</dbReference>
<dbReference type="GO" id="GO:0050832">
    <property type="term" value="P:defense response to fungus"/>
    <property type="evidence" value="ECO:0007669"/>
    <property type="project" value="UniProtKB-KW"/>
</dbReference>
<dbReference type="GO" id="GO:0031640">
    <property type="term" value="P:killing of cells of another organism"/>
    <property type="evidence" value="ECO:0007669"/>
    <property type="project" value="UniProtKB-KW"/>
</dbReference>
<dbReference type="Gene3D" id="3.30.30.10">
    <property type="entry name" value="Knottin, scorpion toxin-like"/>
    <property type="match status" value="1"/>
</dbReference>
<dbReference type="InterPro" id="IPR008176">
    <property type="entry name" value="Defensin_plant"/>
</dbReference>
<dbReference type="InterPro" id="IPR003614">
    <property type="entry name" value="Scorpion_toxin-like"/>
</dbReference>
<dbReference type="InterPro" id="IPR036574">
    <property type="entry name" value="Scorpion_toxin-like_sf"/>
</dbReference>
<dbReference type="Pfam" id="PF00304">
    <property type="entry name" value="Gamma-thionin"/>
    <property type="match status" value="1"/>
</dbReference>
<dbReference type="PRINTS" id="PR00288">
    <property type="entry name" value="PUROTHIONIN"/>
</dbReference>
<dbReference type="SMART" id="SM00505">
    <property type="entry name" value="Knot1"/>
    <property type="match status" value="1"/>
</dbReference>
<dbReference type="SUPFAM" id="SSF57095">
    <property type="entry name" value="Scorpion toxin-like"/>
    <property type="match status" value="1"/>
</dbReference>
<dbReference type="PROSITE" id="PS00940">
    <property type="entry name" value="GAMMA_THIONIN"/>
    <property type="match status" value="1"/>
</dbReference>
<organism evidence="3">
    <name type="scientific">Spinacia oleracea</name>
    <name type="common">Spinach</name>
    <dbReference type="NCBI Taxonomy" id="3562"/>
    <lineage>
        <taxon>Eukaryota</taxon>
        <taxon>Viridiplantae</taxon>
        <taxon>Streptophyta</taxon>
        <taxon>Embryophyta</taxon>
        <taxon>Tracheophyta</taxon>
        <taxon>Spermatophyta</taxon>
        <taxon>Magnoliopsida</taxon>
        <taxon>eudicotyledons</taxon>
        <taxon>Gunneridae</taxon>
        <taxon>Pentapetalae</taxon>
        <taxon>Caryophyllales</taxon>
        <taxon>Chenopodiaceae</taxon>
        <taxon>Chenopodioideae</taxon>
        <taxon>Anserineae</taxon>
        <taxon>Spinacia</taxon>
    </lineage>
</organism>
<comment type="function">
    <text>Antimicrobial peptide. Active against Fusarium spp., Gram-positive and Gram-negative bacterial pathogens.</text>
</comment>
<comment type="subcellular location">
    <subcellularLocation>
        <location evidence="3">Secreted</location>
        <location evidence="3">Cell wall</location>
    </subcellularLocation>
</comment>
<comment type="tissue specificity">
    <text>Distributed in the epidermal cell layer of leaves and in the subepidermal layer region of stems. Not in roots.</text>
</comment>
<comment type="developmental stage">
    <text>Present throughout the life of the leaf.</text>
</comment>
<comment type="mass spectrometry" mass="5804.0" method="MALDI" evidence="2"/>
<comment type="similarity">
    <text evidence="3">Belongs to the DEFL family. Group IV subfamily.</text>
</comment>